<feature type="chain" id="PRO_0000331152" description="Spermidine export protein MdtI">
    <location>
        <begin position="1"/>
        <end position="109"/>
    </location>
</feature>
<feature type="transmembrane region" description="Helical" evidence="1">
    <location>
        <begin position="6"/>
        <end position="26"/>
    </location>
</feature>
<feature type="transmembrane region" description="Helical" evidence="1">
    <location>
        <begin position="36"/>
        <end position="56"/>
    </location>
</feature>
<feature type="transmembrane region" description="Helical" evidence="1">
    <location>
        <begin position="64"/>
        <end position="84"/>
    </location>
</feature>
<feature type="transmembrane region" description="Helical" evidence="1">
    <location>
        <begin position="88"/>
        <end position="108"/>
    </location>
</feature>
<proteinExistence type="inferred from homology"/>
<organism>
    <name type="scientific">Shigella dysenteriae serotype 1 (strain Sd197)</name>
    <dbReference type="NCBI Taxonomy" id="300267"/>
    <lineage>
        <taxon>Bacteria</taxon>
        <taxon>Pseudomonadati</taxon>
        <taxon>Pseudomonadota</taxon>
        <taxon>Gammaproteobacteria</taxon>
        <taxon>Enterobacterales</taxon>
        <taxon>Enterobacteriaceae</taxon>
        <taxon>Shigella</taxon>
    </lineage>
</organism>
<sequence>MAQFEWVHAAWLALAIVLEIVANVFLKFSDGFRRKIFGLLSQAAVLAAFSALSQAVKGIDLSVAYALWGGFGIAATLAAGWILFGQRLNRKGWIGLVLLLAGMIMVKLT</sequence>
<name>MDTI_SHIDS</name>
<evidence type="ECO:0000255" key="1">
    <source>
        <dbReference type="HAMAP-Rule" id="MF_01597"/>
    </source>
</evidence>
<dbReference type="EMBL" id="CP000034">
    <property type="protein sequence ID" value="ABB61690.1"/>
    <property type="molecule type" value="Genomic_DNA"/>
</dbReference>
<dbReference type="RefSeq" id="WP_000046670.1">
    <property type="nucleotide sequence ID" value="NC_007606.1"/>
</dbReference>
<dbReference type="RefSeq" id="YP_403181.1">
    <property type="nucleotide sequence ID" value="NC_007606.1"/>
</dbReference>
<dbReference type="SMR" id="Q32G65"/>
<dbReference type="STRING" id="300267.SDY_1554"/>
<dbReference type="EnsemblBacteria" id="ABB61690">
    <property type="protein sequence ID" value="ABB61690"/>
    <property type="gene ID" value="SDY_1554"/>
</dbReference>
<dbReference type="KEGG" id="sdy:SDY_1554"/>
<dbReference type="PATRIC" id="fig|300267.13.peg.1863"/>
<dbReference type="HOGENOM" id="CLU_133067_0_4_6"/>
<dbReference type="Proteomes" id="UP000002716">
    <property type="component" value="Chromosome"/>
</dbReference>
<dbReference type="GO" id="GO:0005886">
    <property type="term" value="C:plasma membrane"/>
    <property type="evidence" value="ECO:0007669"/>
    <property type="project" value="UniProtKB-SubCell"/>
</dbReference>
<dbReference type="GO" id="GO:0015199">
    <property type="term" value="F:amino-acid betaine transmembrane transporter activity"/>
    <property type="evidence" value="ECO:0007669"/>
    <property type="project" value="TreeGrafter"/>
</dbReference>
<dbReference type="GO" id="GO:0015297">
    <property type="term" value="F:antiporter activity"/>
    <property type="evidence" value="ECO:0007669"/>
    <property type="project" value="TreeGrafter"/>
</dbReference>
<dbReference type="GO" id="GO:0015220">
    <property type="term" value="F:choline transmembrane transporter activity"/>
    <property type="evidence" value="ECO:0007669"/>
    <property type="project" value="TreeGrafter"/>
</dbReference>
<dbReference type="GO" id="GO:0015606">
    <property type="term" value="F:spermidine transmembrane transporter activity"/>
    <property type="evidence" value="ECO:0007669"/>
    <property type="project" value="UniProtKB-UniRule"/>
</dbReference>
<dbReference type="GO" id="GO:0031460">
    <property type="term" value="P:glycine betaine transport"/>
    <property type="evidence" value="ECO:0007669"/>
    <property type="project" value="TreeGrafter"/>
</dbReference>
<dbReference type="FunFam" id="1.10.3730.20:FF:000001">
    <property type="entry name" value="Quaternary ammonium compound resistance transporter SugE"/>
    <property type="match status" value="1"/>
</dbReference>
<dbReference type="Gene3D" id="1.10.3730.20">
    <property type="match status" value="1"/>
</dbReference>
<dbReference type="HAMAP" id="MF_01597">
    <property type="entry name" value="MdtI"/>
    <property type="match status" value="1"/>
</dbReference>
<dbReference type="InterPro" id="IPR000390">
    <property type="entry name" value="Small_drug/metabolite_transptr"/>
</dbReference>
<dbReference type="InterPro" id="IPR045324">
    <property type="entry name" value="Small_multidrug_res"/>
</dbReference>
<dbReference type="InterPro" id="IPR023737">
    <property type="entry name" value="Spermidine_export_MdtI"/>
</dbReference>
<dbReference type="NCBIfam" id="NF007934">
    <property type="entry name" value="PRK10650.1"/>
    <property type="match status" value="1"/>
</dbReference>
<dbReference type="PANTHER" id="PTHR30561">
    <property type="entry name" value="SMR FAMILY PROTON-DEPENDENT DRUG EFFLUX TRANSPORTER SUGE"/>
    <property type="match status" value="1"/>
</dbReference>
<dbReference type="PANTHER" id="PTHR30561:SF6">
    <property type="entry name" value="SPERMIDINE EXPORT PROTEIN MDTI"/>
    <property type="match status" value="1"/>
</dbReference>
<dbReference type="Pfam" id="PF00893">
    <property type="entry name" value="Multi_Drug_Res"/>
    <property type="match status" value="1"/>
</dbReference>
<dbReference type="SUPFAM" id="SSF103481">
    <property type="entry name" value="Multidrug resistance efflux transporter EmrE"/>
    <property type="match status" value="1"/>
</dbReference>
<comment type="function">
    <text evidence="1">Catalyzes the excretion of spermidine.</text>
</comment>
<comment type="subunit">
    <text evidence="1">Forms a complex with MdtJ.</text>
</comment>
<comment type="subcellular location">
    <subcellularLocation>
        <location evidence="1">Cell inner membrane</location>
        <topology evidence="1">Multi-pass membrane protein</topology>
    </subcellularLocation>
</comment>
<comment type="similarity">
    <text evidence="1">Belongs to the drug/metabolite transporter (DMT) superfamily. Small multidrug resistance (SMR) (TC 2.A.7.1) family. MdtI subfamily.</text>
</comment>
<keyword id="KW-0997">Cell inner membrane</keyword>
<keyword id="KW-1003">Cell membrane</keyword>
<keyword id="KW-0472">Membrane</keyword>
<keyword id="KW-1185">Reference proteome</keyword>
<keyword id="KW-0812">Transmembrane</keyword>
<keyword id="KW-1133">Transmembrane helix</keyword>
<keyword id="KW-0813">Transport</keyword>
<protein>
    <recommendedName>
        <fullName evidence="1">Spermidine export protein MdtI</fullName>
    </recommendedName>
</protein>
<reference key="1">
    <citation type="journal article" date="2005" name="Nucleic Acids Res.">
        <title>Genome dynamics and diversity of Shigella species, the etiologic agents of bacillary dysentery.</title>
        <authorList>
            <person name="Yang F."/>
            <person name="Yang J."/>
            <person name="Zhang X."/>
            <person name="Chen L."/>
            <person name="Jiang Y."/>
            <person name="Yan Y."/>
            <person name="Tang X."/>
            <person name="Wang J."/>
            <person name="Xiong Z."/>
            <person name="Dong J."/>
            <person name="Xue Y."/>
            <person name="Zhu Y."/>
            <person name="Xu X."/>
            <person name="Sun L."/>
            <person name="Chen S."/>
            <person name="Nie H."/>
            <person name="Peng J."/>
            <person name="Xu J."/>
            <person name="Wang Y."/>
            <person name="Yuan Z."/>
            <person name="Wen Y."/>
            <person name="Yao Z."/>
            <person name="Shen Y."/>
            <person name="Qiang B."/>
            <person name="Hou Y."/>
            <person name="Yu J."/>
            <person name="Jin Q."/>
        </authorList>
    </citation>
    <scope>NUCLEOTIDE SEQUENCE [LARGE SCALE GENOMIC DNA]</scope>
    <source>
        <strain>Sd197</strain>
    </source>
</reference>
<accession>Q32G65</accession>
<gene>
    <name evidence="1" type="primary">mdtI</name>
    <name type="ordered locus">SDY_1554</name>
</gene>